<feature type="chain" id="PRO_0000326384" description="Matrix protein 2">
    <location>
        <begin position="1"/>
        <end position="97"/>
    </location>
</feature>
<feature type="topological domain" description="Virion surface" evidence="1">
    <location>
        <begin position="1"/>
        <end position="22"/>
    </location>
</feature>
<feature type="transmembrane region" description="Helical; Signal-anchor for type III membrane protein" evidence="1">
    <location>
        <begin position="23"/>
        <end position="43"/>
    </location>
</feature>
<feature type="topological domain" description="Intravirion" evidence="1">
    <location>
        <begin position="44"/>
        <end position="97"/>
    </location>
</feature>
<feature type="region of interest" description="Disordered" evidence="2">
    <location>
        <begin position="60"/>
        <end position="80"/>
    </location>
</feature>
<feature type="site" description="Essential for channel activity, possibly by being protonated during channel activation, and by forming the channel gate and the selective filter" evidence="1">
    <location>
        <position position="37"/>
    </location>
</feature>
<feature type="site" description="Seems to be involved in pH gating" evidence="1">
    <location>
        <position position="41"/>
    </location>
</feature>
<feature type="modified residue" description="Phosphoserine; by host" evidence="1">
    <location>
        <position position="64"/>
    </location>
</feature>
<feature type="disulfide bond" description="Interchain (with C-17)" evidence="1">
    <location>
        <position position="17"/>
    </location>
</feature>
<feature type="disulfide bond" description="Interchain (with C-19)" evidence="1">
    <location>
        <position position="19"/>
    </location>
</feature>
<evidence type="ECO:0000255" key="1">
    <source>
        <dbReference type="HAMAP-Rule" id="MF_04069"/>
    </source>
</evidence>
<evidence type="ECO:0000256" key="2">
    <source>
        <dbReference type="SAM" id="MobiDB-lite"/>
    </source>
</evidence>
<keyword id="KW-0025">Alternative splicing</keyword>
<keyword id="KW-1015">Disulfide bond</keyword>
<keyword id="KW-1032">Host cell membrane</keyword>
<keyword id="KW-1043">Host membrane</keyword>
<keyword id="KW-0945">Host-virus interaction</keyword>
<keyword id="KW-0375">Hydrogen ion transport</keyword>
<keyword id="KW-1083">Inhibition of host autophagy by virus</keyword>
<keyword id="KW-0407">Ion channel</keyword>
<keyword id="KW-0406">Ion transport</keyword>
<keyword id="KW-0449">Lipoprotein</keyword>
<keyword id="KW-0472">Membrane</keyword>
<keyword id="KW-0564">Palmitate</keyword>
<keyword id="KW-0597">Phosphoprotein</keyword>
<keyword id="KW-0735">Signal-anchor</keyword>
<keyword id="KW-0812">Transmembrane</keyword>
<keyword id="KW-1133">Transmembrane helix</keyword>
<keyword id="KW-0813">Transport</keyword>
<keyword id="KW-1182">Viral ion channel</keyword>
<keyword id="KW-0946">Virion</keyword>
<proteinExistence type="inferred from homology"/>
<name>M2_I86A2</name>
<sequence length="97" mass="11128">MSLLTEVETPTRNGWECKCSGSSDPLVIAASIIGILHLILWILDRLFFKFIYRLLKYGLKRGPSTEGVPESMREEYRQEQQNAVDVDDGHFVNIELE</sequence>
<reference key="1">
    <citation type="journal article" date="1991" name="J. Virol.">
        <title>Evolutionary analysis of the influenza A virus M gene with comparison of the M1 and M2 proteins.</title>
        <authorList>
            <person name="Ito T."/>
            <person name="Gorman O.T."/>
            <person name="Kawaoka Y."/>
            <person name="Bean W.J."/>
            <person name="Webster R.G."/>
        </authorList>
    </citation>
    <scope>NUCLEOTIDE SEQUENCE [GENOMIC RNA]</scope>
</reference>
<organism>
    <name type="scientific">Influenza A virus (strain A/Equine/Kentucky/2/1986 H3N8)</name>
    <dbReference type="NCBI Taxonomy" id="385605"/>
    <lineage>
        <taxon>Viruses</taxon>
        <taxon>Riboviria</taxon>
        <taxon>Orthornavirae</taxon>
        <taxon>Negarnaviricota</taxon>
        <taxon>Polyploviricotina</taxon>
        <taxon>Insthoviricetes</taxon>
        <taxon>Articulavirales</taxon>
        <taxon>Orthomyxoviridae</taxon>
        <taxon>Alphainfluenzavirus</taxon>
        <taxon>Alphainfluenzavirus influenzae</taxon>
        <taxon>Influenza A virus</taxon>
    </lineage>
</organism>
<gene>
    <name evidence="1" type="primary">M</name>
</gene>
<organismHost>
    <name type="scientific">Aves</name>
    <dbReference type="NCBI Taxonomy" id="8782"/>
</organismHost>
<organismHost>
    <name type="scientific">Equus caballus</name>
    <name type="common">Horse</name>
    <dbReference type="NCBI Taxonomy" id="9796"/>
</organismHost>
<comment type="function">
    <text evidence="1">Forms a proton-selective ion channel that is necessary for the efficient release of the viral genome during virus entry. After attaching to the cell surface, the virion enters the cell by endocytosis. Acidification of the endosome triggers M2 ion channel activity. The influx of protons into virion interior is believed to disrupt interactions between the viral ribonucleoprotein (RNP), matrix protein 1 (M1), and lipid bilayers, thereby freeing the viral genome from interaction with viral proteins and enabling RNA segments to migrate to the host cell nucleus, where influenza virus RNA transcription and replication occur. Also plays a role in viral proteins secretory pathway. Elevates the intravesicular pH of normally acidic compartments, such as trans-Golgi network, preventing newly formed hemagglutinin from premature switching to the fusion-active conformation.</text>
</comment>
<comment type="activity regulation">
    <text>The M2 protein from most influenza A strains is inhibited by amantadine and rimantadine, resulting in viral uncoating incapacity. Emergence of amantadine-resistant variants is usually rapid.</text>
</comment>
<comment type="subunit">
    <text evidence="1">Homotetramer; composed of two disulfide-linked dimers held together by non-covalent interactions. May interact with matrix protein 1.</text>
</comment>
<comment type="subcellular location">
    <subcellularLocation>
        <location evidence="1">Virion membrane</location>
    </subcellularLocation>
    <subcellularLocation>
        <location evidence="1">Host apical cell membrane</location>
        <topology evidence="1">Single-pass type III membrane protein</topology>
    </subcellularLocation>
    <text evidence="1">Abundantly expressed at the apical plasma membrane in infected polarized epithelial cells, in close proximity to budding and assembled virions. Minor component of virions (only 16-20 molecules/virion).</text>
</comment>
<comment type="alternative products">
    <event type="alternative splicing"/>
    <isoform>
        <id>Q67168-1</id>
        <name>M2</name>
        <sequence type="displayed"/>
    </isoform>
    <isoform>
        <id>Q67169-1</id>
        <name>M1</name>
        <sequence type="external"/>
    </isoform>
    <text>Only the first 9 residues are shared by the 2 isoforms.</text>
</comment>
<comment type="domain">
    <text evidence="1">Cytoplasmic tail plays an important role in virion assembly and morphogenesis.</text>
</comment>
<comment type="miscellaneous">
    <text evidence="1">When the channel is activated, one or more imidazole moieties of His-37 probably become bi-protonated.</text>
</comment>
<comment type="similarity">
    <text evidence="1">Belongs to the influenza viruses matrix protein M2 family.</text>
</comment>
<protein>
    <recommendedName>
        <fullName evidence="1">Matrix protein 2</fullName>
    </recommendedName>
    <alternativeName>
        <fullName evidence="1">Proton channel protein M2</fullName>
    </alternativeName>
</protein>
<dbReference type="EMBL" id="M63540">
    <property type="protein sequence ID" value="AAA43287.1"/>
    <property type="molecule type" value="Genomic_RNA"/>
</dbReference>
<dbReference type="SMR" id="Q67168"/>
<dbReference type="GO" id="GO:0020002">
    <property type="term" value="C:host cell plasma membrane"/>
    <property type="evidence" value="ECO:0007669"/>
    <property type="project" value="UniProtKB-SubCell"/>
</dbReference>
<dbReference type="GO" id="GO:0016020">
    <property type="term" value="C:membrane"/>
    <property type="evidence" value="ECO:0007669"/>
    <property type="project" value="UniProtKB-UniRule"/>
</dbReference>
<dbReference type="GO" id="GO:0055036">
    <property type="term" value="C:virion membrane"/>
    <property type="evidence" value="ECO:0007669"/>
    <property type="project" value="UniProtKB-SubCell"/>
</dbReference>
<dbReference type="GO" id="GO:0005216">
    <property type="term" value="F:monoatomic ion channel activity"/>
    <property type="evidence" value="ECO:0007669"/>
    <property type="project" value="UniProtKB-UniRule"/>
</dbReference>
<dbReference type="GO" id="GO:0015078">
    <property type="term" value="F:proton transmembrane transporter activity"/>
    <property type="evidence" value="ECO:0007669"/>
    <property type="project" value="UniProtKB-UniRule"/>
</dbReference>
<dbReference type="GO" id="GO:0051259">
    <property type="term" value="P:protein complex oligomerization"/>
    <property type="evidence" value="ECO:0007669"/>
    <property type="project" value="UniProtKB-UniRule"/>
</dbReference>
<dbReference type="GO" id="GO:0044694">
    <property type="term" value="P:symbiont genome entry into host cell via pore formation in plasma membrane"/>
    <property type="evidence" value="ECO:0007669"/>
    <property type="project" value="UniProtKB-UniRule"/>
</dbReference>
<dbReference type="GO" id="GO:0140321">
    <property type="term" value="P:symbiont-mediated suppression of host autophagy"/>
    <property type="evidence" value="ECO:0007669"/>
    <property type="project" value="UniProtKB-KW"/>
</dbReference>
<dbReference type="Gene3D" id="6.10.250.1640">
    <property type="match status" value="1"/>
</dbReference>
<dbReference type="HAMAP" id="MF_04069">
    <property type="entry name" value="INFV_M2"/>
    <property type="match status" value="1"/>
</dbReference>
<dbReference type="InterPro" id="IPR002089">
    <property type="entry name" value="Flu_M2"/>
</dbReference>
<dbReference type="Pfam" id="PF00599">
    <property type="entry name" value="Flu_M2"/>
    <property type="match status" value="1"/>
</dbReference>
<accession>Q67168</accession>